<keyword id="KW-0150">Chloroplast</keyword>
<keyword id="KW-0521">NADP</keyword>
<keyword id="KW-0560">Oxidoreductase</keyword>
<keyword id="KW-0934">Plastid</keyword>
<keyword id="KW-1185">Reference proteome</keyword>
<keyword id="KW-0809">Transit peptide</keyword>
<sequence length="270" mass="28146">MSTHSSISQPPLPLAGRVAIVTGSSRGIGRAIAIHLAELGARIVINYTSKAADAERVASEINDFPVREEITGKGPRAIVVQANVSEPSQVKSMFDAAESAFEAPVHILVNSAGILDPKYPTIADTSVEDFDHTFSVNTKGAFLCSKEAANRLKQGGGGRIILLTSSQTRSLKPGFGAYAASKAAVETMVKILAKELKGTGITANCVAPGPIATEMFFDGKTPELVEKIAAESPFGRVGEAKDVVPLVGFLAGDGGEWVNGQIIPVNGGYV</sequence>
<gene>
    <name evidence="4" type="ordered locus">At3g03980</name>
    <name evidence="5" type="ORF">T11I18.9</name>
</gene>
<reference key="1">
    <citation type="journal article" date="2000" name="Nature">
        <title>Sequence and analysis of chromosome 3 of the plant Arabidopsis thaliana.</title>
        <authorList>
            <person name="Salanoubat M."/>
            <person name="Lemcke K."/>
            <person name="Rieger M."/>
            <person name="Ansorge W."/>
            <person name="Unseld M."/>
            <person name="Fartmann B."/>
            <person name="Valle G."/>
            <person name="Bloecker H."/>
            <person name="Perez-Alonso M."/>
            <person name="Obermaier B."/>
            <person name="Delseny M."/>
            <person name="Boutry M."/>
            <person name="Grivell L.A."/>
            <person name="Mache R."/>
            <person name="Puigdomenech P."/>
            <person name="De Simone V."/>
            <person name="Choisne N."/>
            <person name="Artiguenave F."/>
            <person name="Robert C."/>
            <person name="Brottier P."/>
            <person name="Wincker P."/>
            <person name="Cattolico L."/>
            <person name="Weissenbach J."/>
            <person name="Saurin W."/>
            <person name="Quetier F."/>
            <person name="Schaefer M."/>
            <person name="Mueller-Auer S."/>
            <person name="Gabel C."/>
            <person name="Fuchs M."/>
            <person name="Benes V."/>
            <person name="Wurmbach E."/>
            <person name="Drzonek H."/>
            <person name="Erfle H."/>
            <person name="Jordan N."/>
            <person name="Bangert S."/>
            <person name="Wiedelmann R."/>
            <person name="Kranz H."/>
            <person name="Voss H."/>
            <person name="Holland R."/>
            <person name="Brandt P."/>
            <person name="Nyakatura G."/>
            <person name="Vezzi A."/>
            <person name="D'Angelo M."/>
            <person name="Pallavicini A."/>
            <person name="Toppo S."/>
            <person name="Simionati B."/>
            <person name="Conrad A."/>
            <person name="Hornischer K."/>
            <person name="Kauer G."/>
            <person name="Loehnert T.-H."/>
            <person name="Nordsiek G."/>
            <person name="Reichelt J."/>
            <person name="Scharfe M."/>
            <person name="Schoen O."/>
            <person name="Bargues M."/>
            <person name="Terol J."/>
            <person name="Climent J."/>
            <person name="Navarro P."/>
            <person name="Collado C."/>
            <person name="Perez-Perez A."/>
            <person name="Ottenwaelder B."/>
            <person name="Duchemin D."/>
            <person name="Cooke R."/>
            <person name="Laudie M."/>
            <person name="Berger-Llauro C."/>
            <person name="Purnelle B."/>
            <person name="Masuy D."/>
            <person name="de Haan M."/>
            <person name="Maarse A.C."/>
            <person name="Alcaraz J.-P."/>
            <person name="Cottet A."/>
            <person name="Casacuberta E."/>
            <person name="Monfort A."/>
            <person name="Argiriou A."/>
            <person name="Flores M."/>
            <person name="Liguori R."/>
            <person name="Vitale D."/>
            <person name="Mannhaupt G."/>
            <person name="Haase D."/>
            <person name="Schoof H."/>
            <person name="Rudd S."/>
            <person name="Zaccaria P."/>
            <person name="Mewes H.-W."/>
            <person name="Mayer K.F.X."/>
            <person name="Kaul S."/>
            <person name="Town C.D."/>
            <person name="Koo H.L."/>
            <person name="Tallon L.J."/>
            <person name="Jenkins J."/>
            <person name="Rooney T."/>
            <person name="Rizzo M."/>
            <person name="Walts A."/>
            <person name="Utterback T."/>
            <person name="Fujii C.Y."/>
            <person name="Shea T.P."/>
            <person name="Creasy T.H."/>
            <person name="Haas B."/>
            <person name="Maiti R."/>
            <person name="Wu D."/>
            <person name="Peterson J."/>
            <person name="Van Aken S."/>
            <person name="Pai G."/>
            <person name="Militscher J."/>
            <person name="Sellers P."/>
            <person name="Gill J.E."/>
            <person name="Feldblyum T.V."/>
            <person name="Preuss D."/>
            <person name="Lin X."/>
            <person name="Nierman W.C."/>
            <person name="Salzberg S.L."/>
            <person name="White O."/>
            <person name="Venter J.C."/>
            <person name="Fraser C.M."/>
            <person name="Kaneko T."/>
            <person name="Nakamura Y."/>
            <person name="Sato S."/>
            <person name="Kato T."/>
            <person name="Asamizu E."/>
            <person name="Sasamoto S."/>
            <person name="Kimura T."/>
            <person name="Idesawa K."/>
            <person name="Kawashima K."/>
            <person name="Kishida Y."/>
            <person name="Kiyokawa C."/>
            <person name="Kohara M."/>
            <person name="Matsumoto M."/>
            <person name="Matsuno A."/>
            <person name="Muraki A."/>
            <person name="Nakayama S."/>
            <person name="Nakazaki N."/>
            <person name="Shinpo S."/>
            <person name="Takeuchi C."/>
            <person name="Wada T."/>
            <person name="Watanabe A."/>
            <person name="Yamada M."/>
            <person name="Yasuda M."/>
            <person name="Tabata S."/>
        </authorList>
    </citation>
    <scope>NUCLEOTIDE SEQUENCE [LARGE SCALE GENOMIC DNA]</scope>
    <source>
        <strain>cv. Columbia</strain>
    </source>
</reference>
<reference key="2">
    <citation type="journal article" date="2017" name="Plant J.">
        <title>Araport11: a complete reannotation of the Arabidopsis thaliana reference genome.</title>
        <authorList>
            <person name="Cheng C.Y."/>
            <person name="Krishnakumar V."/>
            <person name="Chan A.P."/>
            <person name="Thibaud-Nissen F."/>
            <person name="Schobel S."/>
            <person name="Town C.D."/>
        </authorList>
    </citation>
    <scope>GENOME REANNOTATION</scope>
    <source>
        <strain>cv. Columbia</strain>
    </source>
</reference>
<organism>
    <name type="scientific">Arabidopsis thaliana</name>
    <name type="common">Mouse-ear cress</name>
    <dbReference type="NCBI Taxonomy" id="3702"/>
    <lineage>
        <taxon>Eukaryota</taxon>
        <taxon>Viridiplantae</taxon>
        <taxon>Streptophyta</taxon>
        <taxon>Embryophyta</taxon>
        <taxon>Tracheophyta</taxon>
        <taxon>Spermatophyta</taxon>
        <taxon>Magnoliopsida</taxon>
        <taxon>eudicotyledons</taxon>
        <taxon>Gunneridae</taxon>
        <taxon>Pentapetalae</taxon>
        <taxon>rosids</taxon>
        <taxon>malvids</taxon>
        <taxon>Brassicales</taxon>
        <taxon>Brassicaceae</taxon>
        <taxon>Camelineae</taxon>
        <taxon>Arabidopsis</taxon>
    </lineage>
</organism>
<protein>
    <recommendedName>
        <fullName evidence="2">NADPH-dependent aldehyde reductase-like protein, chloroplastic</fullName>
        <ecNumber evidence="2">1.1.1.-</ecNumber>
    </recommendedName>
</protein>
<comment type="function">
    <text evidence="2">Aldehyde reductase that catalyzes the reduction of the aldehyde carbonyl groups on saturated and alpha,beta-unsaturated aldehydes with more than 5 carbons.</text>
</comment>
<comment type="subcellular location">
    <subcellularLocation>
        <location evidence="2">Plastid</location>
        <location evidence="2">Chloroplast</location>
    </subcellularLocation>
</comment>
<comment type="similarity">
    <text evidence="3">Belongs to the short-chain dehydrogenases/reductases (SDR) family.</text>
</comment>
<dbReference type="EC" id="1.1.1.-" evidence="2"/>
<dbReference type="EMBL" id="AC011698">
    <property type="protein sequence ID" value="AAF05857.1"/>
    <property type="molecule type" value="Genomic_DNA"/>
</dbReference>
<dbReference type="EMBL" id="CP002686">
    <property type="protein sequence ID" value="AEE74022.1"/>
    <property type="molecule type" value="Genomic_DNA"/>
</dbReference>
<dbReference type="RefSeq" id="NP_187048.1">
    <property type="nucleotide sequence ID" value="NM_111269.2"/>
</dbReference>
<dbReference type="SMR" id="Q9SQR4"/>
<dbReference type="FunCoup" id="Q9SQR4">
    <property type="interactions" value="342"/>
</dbReference>
<dbReference type="STRING" id="3702.Q9SQR4"/>
<dbReference type="PaxDb" id="3702-AT3G03980.1"/>
<dbReference type="ProteomicsDB" id="244907"/>
<dbReference type="EnsemblPlants" id="AT3G03980.1">
    <property type="protein sequence ID" value="AT3G03980.1"/>
    <property type="gene ID" value="AT3G03980"/>
</dbReference>
<dbReference type="GeneID" id="819553"/>
<dbReference type="Gramene" id="AT3G03980.1">
    <property type="protein sequence ID" value="AT3G03980.1"/>
    <property type="gene ID" value="AT3G03980"/>
</dbReference>
<dbReference type="KEGG" id="ath:AT3G03980"/>
<dbReference type="Araport" id="AT3G03980"/>
<dbReference type="TAIR" id="AT3G03980"/>
<dbReference type="eggNOG" id="KOG0725">
    <property type="taxonomic scope" value="Eukaryota"/>
</dbReference>
<dbReference type="HOGENOM" id="CLU_010194_1_3_1"/>
<dbReference type="InParanoid" id="Q9SQR4"/>
<dbReference type="OMA" id="EYACTWS"/>
<dbReference type="PhylomeDB" id="Q9SQR4"/>
<dbReference type="BioCyc" id="ARA:AT3G03980-MONOMER"/>
<dbReference type="PRO" id="PR:Q9SQR4"/>
<dbReference type="Proteomes" id="UP000006548">
    <property type="component" value="Chromosome 3"/>
</dbReference>
<dbReference type="ExpressionAtlas" id="Q9SQR4">
    <property type="expression patterns" value="baseline and differential"/>
</dbReference>
<dbReference type="GO" id="GO:0009507">
    <property type="term" value="C:chloroplast"/>
    <property type="evidence" value="ECO:0007669"/>
    <property type="project" value="UniProtKB-SubCell"/>
</dbReference>
<dbReference type="GO" id="GO:0016614">
    <property type="term" value="F:oxidoreductase activity, acting on CH-OH group of donors"/>
    <property type="evidence" value="ECO:0007669"/>
    <property type="project" value="UniProtKB-ARBA"/>
</dbReference>
<dbReference type="CDD" id="cd05362">
    <property type="entry name" value="THN_reductase-like_SDR_c"/>
    <property type="match status" value="1"/>
</dbReference>
<dbReference type="FunFam" id="3.40.50.720:FF:000084">
    <property type="entry name" value="Short-chain dehydrogenase reductase"/>
    <property type="match status" value="1"/>
</dbReference>
<dbReference type="Gene3D" id="3.40.50.720">
    <property type="entry name" value="NAD(P)-binding Rossmann-like Domain"/>
    <property type="match status" value="1"/>
</dbReference>
<dbReference type="InterPro" id="IPR036291">
    <property type="entry name" value="NAD(P)-bd_dom_sf"/>
</dbReference>
<dbReference type="InterPro" id="IPR020904">
    <property type="entry name" value="Sc_DH/Rdtase_CS"/>
</dbReference>
<dbReference type="InterPro" id="IPR002347">
    <property type="entry name" value="SDR_fam"/>
</dbReference>
<dbReference type="PANTHER" id="PTHR48107">
    <property type="entry name" value="NADPH-DEPENDENT ALDEHYDE REDUCTASE-LIKE PROTEIN, CHLOROPLASTIC-RELATED"/>
    <property type="match status" value="1"/>
</dbReference>
<dbReference type="PANTHER" id="PTHR48107:SF7">
    <property type="entry name" value="RE15974P"/>
    <property type="match status" value="1"/>
</dbReference>
<dbReference type="Pfam" id="PF13561">
    <property type="entry name" value="adh_short_C2"/>
    <property type="match status" value="1"/>
</dbReference>
<dbReference type="PRINTS" id="PR00081">
    <property type="entry name" value="GDHRDH"/>
</dbReference>
<dbReference type="PRINTS" id="PR00080">
    <property type="entry name" value="SDRFAMILY"/>
</dbReference>
<dbReference type="SMART" id="SM00822">
    <property type="entry name" value="PKS_KR"/>
    <property type="match status" value="1"/>
</dbReference>
<dbReference type="SUPFAM" id="SSF51735">
    <property type="entry name" value="NAD(P)-binding Rossmann-fold domains"/>
    <property type="match status" value="1"/>
</dbReference>
<dbReference type="PROSITE" id="PS00061">
    <property type="entry name" value="ADH_SHORT"/>
    <property type="match status" value="1"/>
</dbReference>
<evidence type="ECO:0000250" key="1">
    <source>
        <dbReference type="UniProtKB" id="Q12634"/>
    </source>
</evidence>
<evidence type="ECO:0000250" key="2">
    <source>
        <dbReference type="UniProtKB" id="Q9SQR2"/>
    </source>
</evidence>
<evidence type="ECO:0000305" key="3"/>
<evidence type="ECO:0000312" key="4">
    <source>
        <dbReference type="Araport" id="AT3G03980"/>
    </source>
</evidence>
<evidence type="ECO:0000312" key="5">
    <source>
        <dbReference type="EMBL" id="AAF05857.1"/>
    </source>
</evidence>
<feature type="transit peptide" description="Chloroplast" evidence="2">
    <location>
        <begin position="1"/>
        <end position="53"/>
    </location>
</feature>
<feature type="chain" id="PRO_0000439505" description="NADPH-dependent aldehyde reductase-like protein, chloroplastic">
    <location>
        <begin position="54"/>
        <end position="270"/>
    </location>
</feature>
<feature type="active site" description="Proton acceptor" evidence="1">
    <location>
        <position position="178"/>
    </location>
</feature>
<feature type="binding site" evidence="1">
    <location>
        <begin position="26"/>
        <end position="50"/>
    </location>
    <ligand>
        <name>NADP(+)</name>
        <dbReference type="ChEBI" id="CHEBI:58349"/>
    </ligand>
</feature>
<feature type="binding site" evidence="1">
    <location>
        <position position="165"/>
    </location>
    <ligand>
        <name>substrate</name>
    </ligand>
</feature>
<accession>Q9SQR4</accession>
<proteinExistence type="inferred from homology"/>
<name>ADRC3_ARATH</name>